<organism>
    <name type="scientific">Homo sapiens</name>
    <name type="common">Human</name>
    <dbReference type="NCBI Taxonomy" id="9606"/>
    <lineage>
        <taxon>Eukaryota</taxon>
        <taxon>Metazoa</taxon>
        <taxon>Chordata</taxon>
        <taxon>Craniata</taxon>
        <taxon>Vertebrata</taxon>
        <taxon>Euteleostomi</taxon>
        <taxon>Mammalia</taxon>
        <taxon>Eutheria</taxon>
        <taxon>Euarchontoglires</taxon>
        <taxon>Primates</taxon>
        <taxon>Haplorrhini</taxon>
        <taxon>Catarrhini</taxon>
        <taxon>Hominidae</taxon>
        <taxon>Homo</taxon>
    </lineage>
</organism>
<proteinExistence type="uncertain"/>
<comment type="caution">
    <text evidence="2">Could be the product of a pseudogene. Almost identical to the N-terminus of SMG1.</text>
</comment>
<feature type="chain" id="PRO_0000306885" description="Putative uncharacterized SMG1-like protein">
    <location>
        <begin position="1"/>
        <end position="159"/>
    </location>
</feature>
<feature type="region of interest" description="Disordered" evidence="1">
    <location>
        <begin position="1"/>
        <end position="139"/>
    </location>
</feature>
<feature type="compositionally biased region" description="Polar residues" evidence="1">
    <location>
        <begin position="9"/>
        <end position="31"/>
    </location>
</feature>
<feature type="compositionally biased region" description="Basic and acidic residues" evidence="1">
    <location>
        <begin position="65"/>
        <end position="82"/>
    </location>
</feature>
<feature type="compositionally biased region" description="Polar residues" evidence="1">
    <location>
        <begin position="105"/>
        <end position="119"/>
    </location>
</feature>
<feature type="compositionally biased region" description="Basic and acidic residues" evidence="1">
    <location>
        <begin position="125"/>
        <end position="134"/>
    </location>
</feature>
<dbReference type="EMBL" id="BC063703">
    <property type="status" value="NOT_ANNOTATED_CDS"/>
    <property type="molecule type" value="mRNA"/>
</dbReference>
<dbReference type="SMR" id="Q6P435"/>
<dbReference type="iPTMnet" id="Q6P435"/>
<dbReference type="PhosphoSitePlus" id="Q6P435"/>
<dbReference type="BioMuta" id="-"/>
<dbReference type="jPOST" id="Q6P435"/>
<dbReference type="MassIVE" id="Q6P435"/>
<dbReference type="PeptideAtlas" id="Q6P435"/>
<dbReference type="neXtProt" id="NX_Q6P435"/>
<dbReference type="InParanoid" id="Q6P435"/>
<dbReference type="PAN-GO" id="Q6P435">
    <property type="GO annotations" value="0 GO annotations based on evolutionary models"/>
</dbReference>
<dbReference type="PhylomeDB" id="Q6P435"/>
<dbReference type="Pharos" id="Q6P435">
    <property type="development level" value="Tdark"/>
</dbReference>
<dbReference type="Proteomes" id="UP000005640">
    <property type="component" value="Unplaced"/>
</dbReference>
<dbReference type="RNAct" id="Q6P435">
    <property type="molecule type" value="protein"/>
</dbReference>
<dbReference type="InterPro" id="IPR035175">
    <property type="entry name" value="SMG1_N"/>
</dbReference>
<dbReference type="Pfam" id="PF17229">
    <property type="entry name" value="SMG1_N"/>
    <property type="match status" value="1"/>
</dbReference>
<keyword id="KW-1185">Reference proteome</keyword>
<name>SMG1L_HUMAN</name>
<accession>Q6P435</accession>
<sequence>MSRRAPGSRLSSGGTNYSRSWNDWQPRTDSASADPGNLKYSSSRDRGGSSSYGLQPSNSAVVSRQRHDDTRVHADIQNDEKGGYSVNGGSGENTYGRKSLGQELRVNNVTSPEFTSVQHGSRALATKDMRKSQERSMSYCDESRLSNLLRRITREDDRD</sequence>
<reference key="1">
    <citation type="journal article" date="2004" name="Genome Res.">
        <title>The status, quality, and expansion of the NIH full-length cDNA project: the Mammalian Gene Collection (MGC).</title>
        <authorList>
            <consortium name="The MGC Project Team"/>
        </authorList>
    </citation>
    <scope>NUCLEOTIDE SEQUENCE [LARGE SCALE MRNA]</scope>
    <source>
        <tissue>Testis</tissue>
    </source>
</reference>
<evidence type="ECO:0000256" key="1">
    <source>
        <dbReference type="SAM" id="MobiDB-lite"/>
    </source>
</evidence>
<evidence type="ECO:0000305" key="2"/>
<protein>
    <recommendedName>
        <fullName>Putative uncharacterized SMG1-like protein</fullName>
    </recommendedName>
</protein>